<gene>
    <name type="primary">INTS7</name>
    <name type="ORF">RCJMB04_7c6</name>
</gene>
<proteinExistence type="evidence at transcript level"/>
<protein>
    <recommendedName>
        <fullName>Integrator complex subunit 7</fullName>
        <shortName>Int7</shortName>
    </recommendedName>
</protein>
<reference key="1">
    <citation type="journal article" date="2005" name="Genome Biol.">
        <title>Full-length cDNAs from chicken bursal lymphocytes to facilitate gene function analysis.</title>
        <authorList>
            <person name="Caldwell R.B."/>
            <person name="Kierzek A.M."/>
            <person name="Arakawa H."/>
            <person name="Bezzubov Y."/>
            <person name="Zaim J."/>
            <person name="Fiedler P."/>
            <person name="Kutter S."/>
            <person name="Blagodatski A."/>
            <person name="Kostovska D."/>
            <person name="Koter M."/>
            <person name="Plachy J."/>
            <person name="Carninci P."/>
            <person name="Hayashizaki Y."/>
            <person name="Buerstedde J.-M."/>
        </authorList>
    </citation>
    <scope>NUCLEOTIDE SEQUENCE [LARGE SCALE MRNA]</scope>
    <source>
        <strain>CB</strain>
        <tissue>Bursa of Fabricius</tissue>
    </source>
</reference>
<keyword id="KW-0158">Chromosome</keyword>
<keyword id="KW-0963">Cytoplasm</keyword>
<keyword id="KW-0227">DNA damage</keyword>
<keyword id="KW-0539">Nucleus</keyword>
<keyword id="KW-1185">Reference proteome</keyword>
<evidence type="ECO:0000250" key="1">
    <source>
        <dbReference type="UniProtKB" id="Q9NVH2"/>
    </source>
</evidence>
<evidence type="ECO:0000256" key="2">
    <source>
        <dbReference type="SAM" id="MobiDB-lite"/>
    </source>
</evidence>
<evidence type="ECO:0000305" key="3"/>
<accession>Q5ZL91</accession>
<dbReference type="EMBL" id="AJ719843">
    <property type="protein sequence ID" value="CAG31502.1"/>
    <property type="molecule type" value="mRNA"/>
</dbReference>
<dbReference type="RefSeq" id="NP_001006399.1">
    <property type="nucleotide sequence ID" value="NM_001006399.1"/>
</dbReference>
<dbReference type="SMR" id="Q5ZL91"/>
<dbReference type="FunCoup" id="Q5ZL91">
    <property type="interactions" value="1453"/>
</dbReference>
<dbReference type="STRING" id="9031.ENSGALP00000015986"/>
<dbReference type="PaxDb" id="9031-ENSGALP00000015986"/>
<dbReference type="GeneID" id="421374"/>
<dbReference type="KEGG" id="gga:421374"/>
<dbReference type="CTD" id="25896"/>
<dbReference type="VEuPathDB" id="HostDB:geneid_421374"/>
<dbReference type="eggNOG" id="KOG1988">
    <property type="taxonomic scope" value="Eukaryota"/>
</dbReference>
<dbReference type="InParanoid" id="Q5ZL91"/>
<dbReference type="OrthoDB" id="1921953at2759"/>
<dbReference type="PhylomeDB" id="Q5ZL91"/>
<dbReference type="PRO" id="PR:Q5ZL91"/>
<dbReference type="Proteomes" id="UP000000539">
    <property type="component" value="Unassembled WGS sequence"/>
</dbReference>
<dbReference type="GO" id="GO:0005694">
    <property type="term" value="C:chromosome"/>
    <property type="evidence" value="ECO:0007669"/>
    <property type="project" value="UniProtKB-SubCell"/>
</dbReference>
<dbReference type="GO" id="GO:0005737">
    <property type="term" value="C:cytoplasm"/>
    <property type="evidence" value="ECO:0000250"/>
    <property type="project" value="UniProtKB"/>
</dbReference>
<dbReference type="GO" id="GO:0160232">
    <property type="term" value="C:INTAC complex"/>
    <property type="evidence" value="ECO:0000250"/>
    <property type="project" value="UniProtKB"/>
</dbReference>
<dbReference type="GO" id="GO:0032039">
    <property type="term" value="C:integrator complex"/>
    <property type="evidence" value="ECO:0000250"/>
    <property type="project" value="UniProtKB"/>
</dbReference>
<dbReference type="GO" id="GO:0005634">
    <property type="term" value="C:nucleus"/>
    <property type="evidence" value="ECO:0000250"/>
    <property type="project" value="UniProtKB"/>
</dbReference>
<dbReference type="GO" id="GO:0006974">
    <property type="term" value="P:DNA damage response"/>
    <property type="evidence" value="ECO:0007669"/>
    <property type="project" value="UniProtKB-KW"/>
</dbReference>
<dbReference type="GO" id="GO:0160240">
    <property type="term" value="P:RNA polymerase II transcription initiation surveillance"/>
    <property type="evidence" value="ECO:0000250"/>
    <property type="project" value="UniProtKB"/>
</dbReference>
<dbReference type="GO" id="GO:0034472">
    <property type="term" value="P:snRNA 3'-end processing"/>
    <property type="evidence" value="ECO:0000318"/>
    <property type="project" value="GO_Central"/>
</dbReference>
<dbReference type="Gene3D" id="1.25.10.10">
    <property type="entry name" value="Leucine-rich Repeat Variant"/>
    <property type="match status" value="1"/>
</dbReference>
<dbReference type="InterPro" id="IPR011989">
    <property type="entry name" value="ARM-like"/>
</dbReference>
<dbReference type="InterPro" id="IPR016024">
    <property type="entry name" value="ARM-type_fold"/>
</dbReference>
<dbReference type="InterPro" id="IPR033060">
    <property type="entry name" value="INTS7"/>
</dbReference>
<dbReference type="InterPro" id="IPR054519">
    <property type="entry name" value="INTS7_C"/>
</dbReference>
<dbReference type="InterPro" id="IPR056517">
    <property type="entry name" value="INTS7_HB"/>
</dbReference>
<dbReference type="InterPro" id="IPR056516">
    <property type="entry name" value="INTS7_N"/>
</dbReference>
<dbReference type="PANTHER" id="PTHR13322">
    <property type="entry name" value="C1ORF73 PROTEIN"/>
    <property type="match status" value="1"/>
</dbReference>
<dbReference type="PANTHER" id="PTHR13322:SF2">
    <property type="entry name" value="INTEGRATOR COMPLEX SUBUNIT 7"/>
    <property type="match status" value="1"/>
</dbReference>
<dbReference type="Pfam" id="PF22965">
    <property type="entry name" value="INTS7_C"/>
    <property type="match status" value="1"/>
</dbReference>
<dbReference type="Pfam" id="PF24437">
    <property type="entry name" value="INTS7_HB"/>
    <property type="match status" value="1"/>
</dbReference>
<dbReference type="Pfam" id="PF24436">
    <property type="entry name" value="INTS7_N"/>
    <property type="match status" value="1"/>
</dbReference>
<dbReference type="SUPFAM" id="SSF48371">
    <property type="entry name" value="ARM repeat"/>
    <property type="match status" value="1"/>
</dbReference>
<comment type="function">
    <text evidence="1">Component of the integrator complex, a multiprotein complex that terminates RNA polymerase II (Pol II) transcription in the promoter-proximal region of genes. The integrator complex provides a quality checkpoint during transcription elongation by driving premature transcription termination of transcripts that are unfavorably configured for transcriptional elongation: the complex terminates transcription by (1) catalyzing dephosphorylation of the C-terminal domain (CTD) of Pol II subunit POLR2A/RPB1 and SUPT5H/SPT5, (2) degrading the exiting nascent RNA transcript via endonuclease activity and (3) promoting the release of Pol II from bound DNA. The integrator complex is also involved in terminating the synthesis of non-coding Pol II transcripts, such as enhancer RNAs (eRNAs), small nuclear RNAs (snRNAs), telomerase RNAs and long non-coding RNAs (lncRNAs).</text>
</comment>
<comment type="subunit">
    <text evidence="1">Component of the Integrator complex, composed of core subunits INTS1, INTS2, INTS3, INTS4, INTS5, INTS6, INTS7, INTS8, INTS9/RC74, INTS10, INTS11/CPSF3L, INTS12, INTS13, INTS14 and INTS15. The core complex associates with protein phosphatase 2A subunits PPP2CA and PPP2R1A, to form the Integrator-PP2A (INTAC) complex.</text>
</comment>
<comment type="subcellular location">
    <subcellularLocation>
        <location evidence="1">Nucleus</location>
    </subcellularLocation>
    <subcellularLocation>
        <location evidence="1">Chromosome</location>
    </subcellularLocation>
    <subcellularLocation>
        <location evidence="1">Cytoplasm</location>
    </subcellularLocation>
    <text evidence="1">Localizes to sites of DNA damage in a H2AX-independent manner.</text>
</comment>
<comment type="similarity">
    <text evidence="3">Belongs to the Integrator subunit 7 family.</text>
</comment>
<name>INT7_CHICK</name>
<organism>
    <name type="scientific">Gallus gallus</name>
    <name type="common">Chicken</name>
    <dbReference type="NCBI Taxonomy" id="9031"/>
    <lineage>
        <taxon>Eukaryota</taxon>
        <taxon>Metazoa</taxon>
        <taxon>Chordata</taxon>
        <taxon>Craniata</taxon>
        <taxon>Vertebrata</taxon>
        <taxon>Euteleostomi</taxon>
        <taxon>Archelosauria</taxon>
        <taxon>Archosauria</taxon>
        <taxon>Dinosauria</taxon>
        <taxon>Saurischia</taxon>
        <taxon>Theropoda</taxon>
        <taxon>Coelurosauria</taxon>
        <taxon>Aves</taxon>
        <taxon>Neognathae</taxon>
        <taxon>Galloanserae</taxon>
        <taxon>Galliformes</taxon>
        <taxon>Phasianidae</taxon>
        <taxon>Phasianinae</taxon>
        <taxon>Gallus</taxon>
    </lineage>
</organism>
<feature type="chain" id="PRO_0000259551" description="Integrator complex subunit 7">
    <location>
        <begin position="1"/>
        <end position="961"/>
    </location>
</feature>
<feature type="region of interest" description="Disordered" evidence="2">
    <location>
        <begin position="937"/>
        <end position="961"/>
    </location>
</feature>
<feature type="compositionally biased region" description="Low complexity" evidence="2">
    <location>
        <begin position="937"/>
        <end position="955"/>
    </location>
</feature>
<sequence length="961" mass="106531">MAAGGKSFLADAGYGEQELDANSALMELDKGLRSGKLGEQCEAVVRFPRLFQKYPFPILINSAFLKLADVFRVGNNFLRLCVLKVTQQSEKHLEKILNVDEFVKRVFSVIHSNDPVARAITLRMLGSMASIIPERKNAHHSIRQSLDSHDNVEVEAAIFAAANFSAQSKDFAAGICNKISEMIQGLATPVDLKLKLIPILQHMHHDASLASSSRQLLQQLVTSYPSTKMVIVTLHTFTLLAASSLVDIPKQVQLLLQYLKNDPRKAVKRLAIQDLKLLANKIPHTWSRENIQALCESALHTPYDSLKLGMLSVLSTLSGTIAIKQYFSSAPGTAATTARSFDLVKLAQECCYHNNRGIAAHGVRILTNISASCQEKDLLPLEQDAVFGLESLLVLCSQDDSPGAQATLKITLTCMVKLVKCRPHLSQSVVESLLTQLHSAQDAARILMCHCLAAIAMQLPVLADGMLGDLMELYKVIGRSTTDKKQELLVSLATVIFVSSQKALSPEIKTVIKQQLENASNGWTAYRIARQASRMGNHDMARELYQSLLTQVASEHFYFWLNSLKEFSHAEQCLTGLQEDNYSSALSCIAEALKSYHKGIASLTAASTPLNPLSFQCGFVKLRIDLLQAFSQLICTCNSLKTSPPPAIATTIAMTSGNDLQRCGRISNQMKLSMEEFRNLAVRYGDLYQSSFDADSATLRNVELQQQSCLLISHAIEALILDPESANFQEYSSNGAAHVESEYERRMMSVFNHVLEEVESLNRKYAPVSYLHTACLCSAVIALLKVPLSFQRYFFQKLQSTSIKLALSPSPRNPAEPIAVQNNQQLALKVEGVVQHGSKPGLFRKIQSVCLNVSSVLQSKSGQDYKIPIDNMTNEMEQRVEPHNDYFSTQFLLNFVILDTHNITVESSVIDSNGIVWKTGPKTTIFVKSLEDPYSQQVRLQQQQGQPPSQQQQQRTAYSRF</sequence>